<keyword id="KW-0217">Developmental protein</keyword>
<reference key="1">
    <citation type="journal article" date="1994" name="Development">
        <title>Drosophila virilis oskar transgenes direct body patterning but not pole cell formation or maintenance of mRNA localization in D. melanogaster.</title>
        <authorList>
            <person name="Webster P.J."/>
            <person name="Suen J."/>
            <person name="Macdonald P.M."/>
        </authorList>
    </citation>
    <scope>NUCLEOTIDE SEQUENCE [GENOMIC DNA]</scope>
</reference>
<accession>Q24741</accession>
<comment type="function">
    <text evidence="1">Organizes the germ plasm and directs localization of the posterior determinant nanos. Oskar protein is required to keep oskar RNA and staufen protein at the posterior pole (By similarity).</text>
</comment>
<comment type="subunit">
    <text evidence="1">Interacts with smaug (smg).</text>
</comment>
<comment type="tissue specificity">
    <text>Posterior pole of the oocyte.</text>
</comment>
<sequence>MATFRSEFNSVPNTYNQRLTALKKKLTTCFQQWRQQLLKLHQQQQQPKQQQQQQQHQSQHQHQQQKQKQRGSEHFYNIFVRADCSILSEKVTYLRKFKRIFTARQNLASARTAATAASAKQPVLGRCIGQEEQQLQIVASLFSSTLISKHSSSASITSSSMTIMDNTYIGVRDEYPDIDTEIRSILLANAQNGITISSIKKEYRQLTGTAFPLHDNITDFLLTIPHVTAECCESGKRIFNIKPTEHTRHLHEMILQQRQRDSVSNPIQAQEPPRLWRAQYKRRIPQHFNFNLNTSEKPPAVKISKLQPLATAAAMSNDVYQDNWKHLNNQYQLPQLNAPKNNIHSHIASNPAQLQAALPAEHHPSKHVEEYAHKRRHEYTRTPTTLSCPSTQHDSMFTINSDYDAYLLDFPLLGDDFFLYLARMELKCRFKKFEKVLQSGLCISGQTINAARQRLRLVELPEMTQIIVNIGSEDIMRGRSLVQIEHDFRLLVKEMHNRRFVPVLTTLAPLANCRHDKQTCDKVSRFNKFIRSEGRHLKVIDIHSCLINENGIVRFDCFQNGPRSVTGSSEPYVFWNKIGRQRVLHMIEENLEYY</sequence>
<feature type="chain" id="PRO_0000058087" description="Maternal effect protein oskar">
    <location>
        <begin position="1"/>
        <end position="594"/>
    </location>
</feature>
<feature type="domain" description="HTH OST-type" evidence="2">
    <location>
        <begin position="174"/>
        <end position="243"/>
    </location>
</feature>
<feature type="region of interest" description="Disordered" evidence="3">
    <location>
        <begin position="44"/>
        <end position="68"/>
    </location>
</feature>
<feature type="compositionally biased region" description="Low complexity" evidence="3">
    <location>
        <begin position="44"/>
        <end position="62"/>
    </location>
</feature>
<gene>
    <name type="primary">osk</name>
</gene>
<dbReference type="EMBL" id="L22556">
    <property type="protein sequence ID" value="AAA28426.1"/>
    <property type="molecule type" value="Genomic_DNA"/>
</dbReference>
<dbReference type="SMR" id="Q24741"/>
<dbReference type="eggNOG" id="ENOG502SUPD">
    <property type="taxonomic scope" value="Eukaryota"/>
</dbReference>
<dbReference type="OrthoDB" id="10034606at2759"/>
<dbReference type="GO" id="GO:0043073">
    <property type="term" value="C:germ cell nucleus"/>
    <property type="evidence" value="ECO:0007669"/>
    <property type="project" value="EnsemblMetazoa"/>
</dbReference>
<dbReference type="GO" id="GO:0043186">
    <property type="term" value="C:P granule"/>
    <property type="evidence" value="ECO:0007669"/>
    <property type="project" value="EnsemblMetazoa"/>
</dbReference>
<dbReference type="GO" id="GO:0061803">
    <property type="term" value="C:posterior cell cortex"/>
    <property type="evidence" value="ECO:0007669"/>
    <property type="project" value="EnsemblMetazoa"/>
</dbReference>
<dbReference type="GO" id="GO:0003729">
    <property type="term" value="F:mRNA binding"/>
    <property type="evidence" value="ECO:0007669"/>
    <property type="project" value="EnsemblMetazoa"/>
</dbReference>
<dbReference type="GO" id="GO:0030866">
    <property type="term" value="P:cortical actin cytoskeleton organization"/>
    <property type="evidence" value="ECO:0007669"/>
    <property type="project" value="EnsemblMetazoa"/>
</dbReference>
<dbReference type="GO" id="GO:0008103">
    <property type="term" value="P:oocyte microtubule cytoskeleton polarization"/>
    <property type="evidence" value="ECO:0007669"/>
    <property type="project" value="EnsemblMetazoa"/>
</dbReference>
<dbReference type="GO" id="GO:1903863">
    <property type="term" value="P:P granule assembly"/>
    <property type="evidence" value="ECO:0007669"/>
    <property type="project" value="EnsemblMetazoa"/>
</dbReference>
<dbReference type="GO" id="GO:0007279">
    <property type="term" value="P:pole cell formation"/>
    <property type="evidence" value="ECO:0007669"/>
    <property type="project" value="EnsemblMetazoa"/>
</dbReference>
<dbReference type="GO" id="GO:0007359">
    <property type="term" value="P:posterior abdomen determination"/>
    <property type="evidence" value="ECO:0007669"/>
    <property type="project" value="EnsemblMetazoa"/>
</dbReference>
<dbReference type="GO" id="GO:0034504">
    <property type="term" value="P:protein localization to nucleus"/>
    <property type="evidence" value="ECO:0007669"/>
    <property type="project" value="EnsemblMetazoa"/>
</dbReference>
<dbReference type="GO" id="GO:0043488">
    <property type="term" value="P:regulation of mRNA stability"/>
    <property type="evidence" value="ECO:0007669"/>
    <property type="project" value="EnsemblMetazoa"/>
</dbReference>
<dbReference type="GO" id="GO:0040040">
    <property type="term" value="P:thermosensory behavior"/>
    <property type="evidence" value="ECO:0007669"/>
    <property type="project" value="EnsemblMetazoa"/>
</dbReference>
<dbReference type="GO" id="GO:0008542">
    <property type="term" value="P:visual learning"/>
    <property type="evidence" value="ECO:0007669"/>
    <property type="project" value="EnsemblMetazoa"/>
</dbReference>
<dbReference type="Gene3D" id="3.30.420.610">
    <property type="entry name" value="LOTUS domain-like"/>
    <property type="match status" value="1"/>
</dbReference>
<dbReference type="Gene3D" id="3.40.50.1110">
    <property type="entry name" value="SGNH hydrolase"/>
    <property type="match status" value="1"/>
</dbReference>
<dbReference type="InterPro" id="IPR041966">
    <property type="entry name" value="LOTUS-like"/>
</dbReference>
<dbReference type="InterPro" id="IPR033447">
    <property type="entry name" value="OSK"/>
</dbReference>
<dbReference type="InterPro" id="IPR025605">
    <property type="entry name" value="OST-HTH/LOTUS_dom"/>
</dbReference>
<dbReference type="InterPro" id="IPR036514">
    <property type="entry name" value="SGNH_hydro_sf"/>
</dbReference>
<dbReference type="Pfam" id="PF17182">
    <property type="entry name" value="OSK"/>
    <property type="match status" value="1"/>
</dbReference>
<dbReference type="Pfam" id="PF12872">
    <property type="entry name" value="OST-HTH"/>
    <property type="match status" value="1"/>
</dbReference>
<dbReference type="SUPFAM" id="SSF52266">
    <property type="entry name" value="SGNH hydrolase"/>
    <property type="match status" value="1"/>
</dbReference>
<dbReference type="PROSITE" id="PS51644">
    <property type="entry name" value="HTH_OST"/>
    <property type="match status" value="1"/>
</dbReference>
<protein>
    <recommendedName>
        <fullName>Maternal effect protein oskar</fullName>
    </recommendedName>
</protein>
<name>OSKA_DROVI</name>
<proteinExistence type="evidence at transcript level"/>
<evidence type="ECO:0000250" key="1"/>
<evidence type="ECO:0000255" key="2">
    <source>
        <dbReference type="PROSITE-ProRule" id="PRU00975"/>
    </source>
</evidence>
<evidence type="ECO:0000256" key="3">
    <source>
        <dbReference type="SAM" id="MobiDB-lite"/>
    </source>
</evidence>
<organism>
    <name type="scientific">Drosophila virilis</name>
    <name type="common">Fruit fly</name>
    <dbReference type="NCBI Taxonomy" id="7244"/>
    <lineage>
        <taxon>Eukaryota</taxon>
        <taxon>Metazoa</taxon>
        <taxon>Ecdysozoa</taxon>
        <taxon>Arthropoda</taxon>
        <taxon>Hexapoda</taxon>
        <taxon>Insecta</taxon>
        <taxon>Pterygota</taxon>
        <taxon>Neoptera</taxon>
        <taxon>Endopterygota</taxon>
        <taxon>Diptera</taxon>
        <taxon>Brachycera</taxon>
        <taxon>Muscomorpha</taxon>
        <taxon>Ephydroidea</taxon>
        <taxon>Drosophilidae</taxon>
        <taxon>Drosophila</taxon>
    </lineage>
</organism>